<name>PURQ_BACP2</name>
<proteinExistence type="inferred from homology"/>
<feature type="chain" id="PRO_1000194849" description="Phosphoribosylformylglycinamidine synthase subunit PurQ">
    <location>
        <begin position="1"/>
        <end position="227"/>
    </location>
</feature>
<feature type="domain" description="Glutamine amidotransferase type-1" evidence="1">
    <location>
        <begin position="3"/>
        <end position="225"/>
    </location>
</feature>
<feature type="active site" description="Nucleophile" evidence="1">
    <location>
        <position position="86"/>
    </location>
</feature>
<feature type="active site" evidence="1">
    <location>
        <position position="194"/>
    </location>
</feature>
<feature type="active site" evidence="1">
    <location>
        <position position="196"/>
    </location>
</feature>
<dbReference type="EC" id="6.3.5.3" evidence="1"/>
<dbReference type="EC" id="3.5.1.2" evidence="1"/>
<dbReference type="EMBL" id="CP000813">
    <property type="protein sequence ID" value="ABV61293.1"/>
    <property type="molecule type" value="Genomic_DNA"/>
</dbReference>
<dbReference type="RefSeq" id="WP_012009142.1">
    <property type="nucleotide sequence ID" value="NZ_VEIS01000001.1"/>
</dbReference>
<dbReference type="SMR" id="A8FAM6"/>
<dbReference type="STRING" id="315750.BPUM_0601"/>
<dbReference type="GeneID" id="5619849"/>
<dbReference type="KEGG" id="bpu:BPUM_0601"/>
<dbReference type="eggNOG" id="COG0047">
    <property type="taxonomic scope" value="Bacteria"/>
</dbReference>
<dbReference type="HOGENOM" id="CLU_001031_3_1_9"/>
<dbReference type="OrthoDB" id="9804441at2"/>
<dbReference type="UniPathway" id="UPA00074">
    <property type="reaction ID" value="UER00128"/>
</dbReference>
<dbReference type="Proteomes" id="UP000001355">
    <property type="component" value="Chromosome"/>
</dbReference>
<dbReference type="GO" id="GO:0005737">
    <property type="term" value="C:cytoplasm"/>
    <property type="evidence" value="ECO:0007669"/>
    <property type="project" value="UniProtKB-SubCell"/>
</dbReference>
<dbReference type="GO" id="GO:0005524">
    <property type="term" value="F:ATP binding"/>
    <property type="evidence" value="ECO:0007669"/>
    <property type="project" value="UniProtKB-KW"/>
</dbReference>
<dbReference type="GO" id="GO:0004359">
    <property type="term" value="F:glutaminase activity"/>
    <property type="evidence" value="ECO:0007669"/>
    <property type="project" value="UniProtKB-EC"/>
</dbReference>
<dbReference type="GO" id="GO:0004642">
    <property type="term" value="F:phosphoribosylformylglycinamidine synthase activity"/>
    <property type="evidence" value="ECO:0007669"/>
    <property type="project" value="UniProtKB-UniRule"/>
</dbReference>
<dbReference type="GO" id="GO:0006189">
    <property type="term" value="P:'de novo' IMP biosynthetic process"/>
    <property type="evidence" value="ECO:0007669"/>
    <property type="project" value="UniProtKB-UniRule"/>
</dbReference>
<dbReference type="CDD" id="cd01740">
    <property type="entry name" value="GATase1_FGAR_AT"/>
    <property type="match status" value="1"/>
</dbReference>
<dbReference type="FunFam" id="3.40.50.880:FF:000019">
    <property type="entry name" value="Phosphoribosylformylglycinamidine synthase subunit PurQ"/>
    <property type="match status" value="1"/>
</dbReference>
<dbReference type="Gene3D" id="3.40.50.880">
    <property type="match status" value="1"/>
</dbReference>
<dbReference type="HAMAP" id="MF_00421">
    <property type="entry name" value="PurQ"/>
    <property type="match status" value="1"/>
</dbReference>
<dbReference type="InterPro" id="IPR029062">
    <property type="entry name" value="Class_I_gatase-like"/>
</dbReference>
<dbReference type="InterPro" id="IPR010075">
    <property type="entry name" value="PRibForGlyAmidine_synth_PurQ"/>
</dbReference>
<dbReference type="NCBIfam" id="TIGR01737">
    <property type="entry name" value="FGAM_synth_I"/>
    <property type="match status" value="1"/>
</dbReference>
<dbReference type="NCBIfam" id="NF002957">
    <property type="entry name" value="PRK03619.1"/>
    <property type="match status" value="1"/>
</dbReference>
<dbReference type="PANTHER" id="PTHR47552">
    <property type="entry name" value="PHOSPHORIBOSYLFORMYLGLYCINAMIDINE SYNTHASE SUBUNIT PURQ"/>
    <property type="match status" value="1"/>
</dbReference>
<dbReference type="PANTHER" id="PTHR47552:SF1">
    <property type="entry name" value="PHOSPHORIBOSYLFORMYLGLYCINAMIDINE SYNTHASE SUBUNIT PURQ"/>
    <property type="match status" value="1"/>
</dbReference>
<dbReference type="Pfam" id="PF13507">
    <property type="entry name" value="GATase_5"/>
    <property type="match status" value="1"/>
</dbReference>
<dbReference type="PIRSF" id="PIRSF001586">
    <property type="entry name" value="FGAM_synth_I"/>
    <property type="match status" value="1"/>
</dbReference>
<dbReference type="SMART" id="SM01211">
    <property type="entry name" value="GATase_5"/>
    <property type="match status" value="1"/>
</dbReference>
<dbReference type="SUPFAM" id="SSF52317">
    <property type="entry name" value="Class I glutamine amidotransferase-like"/>
    <property type="match status" value="1"/>
</dbReference>
<dbReference type="PROSITE" id="PS51273">
    <property type="entry name" value="GATASE_TYPE_1"/>
    <property type="match status" value="1"/>
</dbReference>
<protein>
    <recommendedName>
        <fullName evidence="1">Phosphoribosylformylglycinamidine synthase subunit PurQ</fullName>
        <shortName evidence="1">FGAM synthase</shortName>
        <ecNumber evidence="1">6.3.5.3</ecNumber>
    </recommendedName>
    <alternativeName>
        <fullName evidence="1">Formylglycinamide ribonucleotide amidotransferase subunit I</fullName>
        <shortName evidence="1">FGAR amidotransferase I</shortName>
        <shortName evidence="1">FGAR-AT I</shortName>
    </alternativeName>
    <alternativeName>
        <fullName evidence="1">Glutaminase PurQ</fullName>
        <ecNumber evidence="1">3.5.1.2</ecNumber>
    </alternativeName>
    <alternativeName>
        <fullName evidence="1">Phosphoribosylformylglycinamidine synthase subunit I</fullName>
    </alternativeName>
</protein>
<keyword id="KW-0067">ATP-binding</keyword>
<keyword id="KW-0963">Cytoplasm</keyword>
<keyword id="KW-0315">Glutamine amidotransferase</keyword>
<keyword id="KW-0378">Hydrolase</keyword>
<keyword id="KW-0436">Ligase</keyword>
<keyword id="KW-0547">Nucleotide-binding</keyword>
<keyword id="KW-0658">Purine biosynthesis</keyword>
<evidence type="ECO:0000255" key="1">
    <source>
        <dbReference type="HAMAP-Rule" id="MF_00421"/>
    </source>
</evidence>
<gene>
    <name evidence="1" type="primary">purQ</name>
    <name type="ordered locus">BPUM_0601</name>
</gene>
<organism>
    <name type="scientific">Bacillus pumilus (strain SAFR-032)</name>
    <dbReference type="NCBI Taxonomy" id="315750"/>
    <lineage>
        <taxon>Bacteria</taxon>
        <taxon>Bacillati</taxon>
        <taxon>Bacillota</taxon>
        <taxon>Bacilli</taxon>
        <taxon>Bacillales</taxon>
        <taxon>Bacillaceae</taxon>
        <taxon>Bacillus</taxon>
    </lineage>
</organism>
<sequence>MKFAVIVLPGSNCDIDMYHAIQDELGEQVEYVWHDETSLDGFDGVLVPGGFSYGDYLRCGAIARFSNIMPAVKKAAAEGKPVLGVCNGFQILQELGILPGAMRRNKDLKFICRPVELIVENNETQFTSGYQKGESISVPVAHGEGNFYCDEDTLAKLIENNQIAFTYGDDINGSVNRIAGITNEEGNVLGMMPHPERAVDSLLGSADGLKLFQSIVKNWRDTHVTTA</sequence>
<comment type="function">
    <text evidence="1">Part of the phosphoribosylformylglycinamidine synthase complex involved in the purines biosynthetic pathway. Catalyzes the ATP-dependent conversion of formylglycinamide ribonucleotide (FGAR) and glutamine to yield formylglycinamidine ribonucleotide (FGAM) and glutamate. The FGAM synthase complex is composed of three subunits. PurQ produces an ammonia molecule by converting glutamine to glutamate. PurL transfers the ammonia molecule to FGAR to form FGAM in an ATP-dependent manner. PurS interacts with PurQ and PurL and is thought to assist in the transfer of the ammonia molecule from PurQ to PurL.</text>
</comment>
<comment type="catalytic activity">
    <reaction evidence="1">
        <text>N(2)-formyl-N(1)-(5-phospho-beta-D-ribosyl)glycinamide + L-glutamine + ATP + H2O = 2-formamido-N(1)-(5-O-phospho-beta-D-ribosyl)acetamidine + L-glutamate + ADP + phosphate + H(+)</text>
        <dbReference type="Rhea" id="RHEA:17129"/>
        <dbReference type="ChEBI" id="CHEBI:15377"/>
        <dbReference type="ChEBI" id="CHEBI:15378"/>
        <dbReference type="ChEBI" id="CHEBI:29985"/>
        <dbReference type="ChEBI" id="CHEBI:30616"/>
        <dbReference type="ChEBI" id="CHEBI:43474"/>
        <dbReference type="ChEBI" id="CHEBI:58359"/>
        <dbReference type="ChEBI" id="CHEBI:147286"/>
        <dbReference type="ChEBI" id="CHEBI:147287"/>
        <dbReference type="ChEBI" id="CHEBI:456216"/>
        <dbReference type="EC" id="6.3.5.3"/>
    </reaction>
</comment>
<comment type="catalytic activity">
    <reaction evidence="1">
        <text>L-glutamine + H2O = L-glutamate + NH4(+)</text>
        <dbReference type="Rhea" id="RHEA:15889"/>
        <dbReference type="ChEBI" id="CHEBI:15377"/>
        <dbReference type="ChEBI" id="CHEBI:28938"/>
        <dbReference type="ChEBI" id="CHEBI:29985"/>
        <dbReference type="ChEBI" id="CHEBI:58359"/>
        <dbReference type="EC" id="3.5.1.2"/>
    </reaction>
</comment>
<comment type="pathway">
    <text evidence="1">Purine metabolism; IMP biosynthesis via de novo pathway; 5-amino-1-(5-phospho-D-ribosyl)imidazole from N(2)-formyl-N(1)-(5-phospho-D-ribosyl)glycinamide: step 1/2.</text>
</comment>
<comment type="subunit">
    <text evidence="1">Part of the FGAM synthase complex composed of 1 PurL, 1 PurQ and 2 PurS subunits.</text>
</comment>
<comment type="subcellular location">
    <subcellularLocation>
        <location evidence="1">Cytoplasm</location>
    </subcellularLocation>
</comment>
<reference key="1">
    <citation type="journal article" date="2007" name="PLoS ONE">
        <title>Paradoxical DNA repair and peroxide resistance gene conservation in Bacillus pumilus SAFR-032.</title>
        <authorList>
            <person name="Gioia J."/>
            <person name="Yerrapragada S."/>
            <person name="Qin X."/>
            <person name="Jiang H."/>
            <person name="Igboeli O.C."/>
            <person name="Muzny D."/>
            <person name="Dugan-Rocha S."/>
            <person name="Ding Y."/>
            <person name="Hawes A."/>
            <person name="Liu W."/>
            <person name="Perez L."/>
            <person name="Kovar C."/>
            <person name="Dinh H."/>
            <person name="Lee S."/>
            <person name="Nazareth L."/>
            <person name="Blyth P."/>
            <person name="Holder M."/>
            <person name="Buhay C."/>
            <person name="Tirumalai M.R."/>
            <person name="Liu Y."/>
            <person name="Dasgupta I."/>
            <person name="Bokhetache L."/>
            <person name="Fujita M."/>
            <person name="Karouia F."/>
            <person name="Eswara Moorthy P."/>
            <person name="Siefert J."/>
            <person name="Uzman A."/>
            <person name="Buzumbo P."/>
            <person name="Verma A."/>
            <person name="Zwiya H."/>
            <person name="McWilliams B.D."/>
            <person name="Olowu A."/>
            <person name="Clinkenbeard K.D."/>
            <person name="Newcombe D."/>
            <person name="Golebiewski L."/>
            <person name="Petrosino J.F."/>
            <person name="Nicholson W.L."/>
            <person name="Fox G.E."/>
            <person name="Venkateswaran K."/>
            <person name="Highlander S.K."/>
            <person name="Weinstock G.M."/>
        </authorList>
    </citation>
    <scope>NUCLEOTIDE SEQUENCE [LARGE SCALE GENOMIC DNA]</scope>
    <source>
        <strain>SAFR-032</strain>
    </source>
</reference>
<accession>A8FAM6</accession>